<dbReference type="EC" id="2.1.1.-"/>
<dbReference type="EMBL" id="LT708304">
    <property type="protein sequence ID" value="SIT99515.1"/>
    <property type="molecule type" value="Genomic_DNA"/>
</dbReference>
<dbReference type="RefSeq" id="NP_854574.1">
    <property type="nucleotide sequence ID" value="NC_002945.3"/>
</dbReference>
<dbReference type="RefSeq" id="WP_003404654.1">
    <property type="nucleotide sequence ID" value="NC_002945.4"/>
</dbReference>
<dbReference type="SMR" id="P64748"/>
<dbReference type="KEGG" id="mbo:BQ2027_MB0917C"/>
<dbReference type="PATRIC" id="fig|233413.5.peg.998"/>
<dbReference type="Proteomes" id="UP000001419">
    <property type="component" value="Chromosome"/>
</dbReference>
<dbReference type="GO" id="GO:0008168">
    <property type="term" value="F:methyltransferase activity"/>
    <property type="evidence" value="ECO:0007669"/>
    <property type="project" value="UniProtKB-KW"/>
</dbReference>
<dbReference type="GO" id="GO:0032259">
    <property type="term" value="P:methylation"/>
    <property type="evidence" value="ECO:0007669"/>
    <property type="project" value="UniProtKB-KW"/>
</dbReference>
<dbReference type="FunFam" id="3.40.50.150:FF:000152">
    <property type="entry name" value="S-adenosyl-L-methionine-dependent methyltransferase"/>
    <property type="match status" value="1"/>
</dbReference>
<dbReference type="Gene3D" id="3.40.50.150">
    <property type="entry name" value="Vaccinia Virus protein VP39"/>
    <property type="match status" value="1"/>
</dbReference>
<dbReference type="InterPro" id="IPR007213">
    <property type="entry name" value="Ppm1/Ppm2/Tcmp"/>
</dbReference>
<dbReference type="InterPro" id="IPR029063">
    <property type="entry name" value="SAM-dependent_MTases_sf"/>
</dbReference>
<dbReference type="InterPro" id="IPR011610">
    <property type="entry name" value="SAM_mthyl_Trfase_ML2640-like"/>
</dbReference>
<dbReference type="NCBIfam" id="TIGR00027">
    <property type="entry name" value="mthyl_TIGR00027"/>
    <property type="match status" value="1"/>
</dbReference>
<dbReference type="PANTHER" id="PTHR43619">
    <property type="entry name" value="S-ADENOSYL-L-METHIONINE-DEPENDENT METHYLTRANSFERASE YKTD-RELATED"/>
    <property type="match status" value="1"/>
</dbReference>
<dbReference type="PANTHER" id="PTHR43619:SF2">
    <property type="entry name" value="S-ADENOSYL-L-METHIONINE-DEPENDENT METHYLTRANSFERASES SUPERFAMILY PROTEIN"/>
    <property type="match status" value="1"/>
</dbReference>
<dbReference type="Pfam" id="PF04072">
    <property type="entry name" value="LCM"/>
    <property type="match status" value="1"/>
</dbReference>
<dbReference type="SUPFAM" id="SSF53335">
    <property type="entry name" value="S-adenosyl-L-methionine-dependent methyltransferases"/>
    <property type="match status" value="1"/>
</dbReference>
<feature type="chain" id="PRO_0000103734" description="Putative S-adenosyl-L-methionine-dependent methyltransferase Mb0917c">
    <location>
        <begin position="1"/>
        <end position="325"/>
    </location>
</feature>
<feature type="binding site" evidence="1">
    <location>
        <position position="126"/>
    </location>
    <ligand>
        <name>S-adenosyl-L-methionine</name>
        <dbReference type="ChEBI" id="CHEBI:59789"/>
    </ligand>
</feature>
<feature type="binding site" evidence="1">
    <location>
        <begin position="155"/>
        <end position="156"/>
    </location>
    <ligand>
        <name>S-adenosyl-L-methionine</name>
        <dbReference type="ChEBI" id="CHEBI:59789"/>
    </ligand>
</feature>
<name>Y917_MYCBO</name>
<keyword id="KW-0489">Methyltransferase</keyword>
<keyword id="KW-1185">Reference proteome</keyword>
<keyword id="KW-0949">S-adenosyl-L-methionine</keyword>
<keyword id="KW-0808">Transferase</keyword>
<sequence length="325" mass="36073">MRTEDDSWDVTTSVGSTGLLVAAARALETQKADPLAIDPYAEVFCRAAGGEWADVLDGKLPDHYLTTGDFGEHFVNFQGARTRYFDEYFSRATAAGMKQVVILAAGLDSRAFRLQWPIGTTIFELDRPQVLDFKNAVLADYHIRPRAQRRSVAVDLRDEWQIALCNNGFDANRPSAWIAEGLLVYLSAEAQQRLFIGIDTLASPGSHVAVEEATPLDPCEFAAKLERERAANAQGDPRRFFQMVYNERWARATEWFDERGWRATATPLAEYLRRVGRAVPEADTEAAPMVTAITFVSAVRTGLVADPARTSPSSTSIGFKRFEAD</sequence>
<proteinExistence type="inferred from homology"/>
<accession>P64748</accession>
<accession>A0A1R3XX40</accession>
<accession>Q10552</accession>
<accession>X2BGF9</accession>
<comment type="function">
    <text evidence="1">Exhibits S-adenosyl-L-methionine-dependent methyltransferase activity.</text>
</comment>
<comment type="similarity">
    <text evidence="2">Belongs to the UPF0677 family.</text>
</comment>
<organism>
    <name type="scientific">Mycobacterium bovis (strain ATCC BAA-935 / AF2122/97)</name>
    <dbReference type="NCBI Taxonomy" id="233413"/>
    <lineage>
        <taxon>Bacteria</taxon>
        <taxon>Bacillati</taxon>
        <taxon>Actinomycetota</taxon>
        <taxon>Actinomycetes</taxon>
        <taxon>Mycobacteriales</taxon>
        <taxon>Mycobacteriaceae</taxon>
        <taxon>Mycobacterium</taxon>
        <taxon>Mycobacterium tuberculosis complex</taxon>
    </lineage>
</organism>
<protein>
    <recommendedName>
        <fullName>Putative S-adenosyl-L-methionine-dependent methyltransferase Mb0917c</fullName>
        <ecNumber>2.1.1.-</ecNumber>
    </recommendedName>
</protein>
<gene>
    <name type="ordered locus">BQ2027_MB0917C</name>
</gene>
<evidence type="ECO:0000250" key="1"/>
<evidence type="ECO:0000305" key="2"/>
<reference key="1">
    <citation type="journal article" date="2003" name="Proc. Natl. Acad. Sci. U.S.A.">
        <title>The complete genome sequence of Mycobacterium bovis.</title>
        <authorList>
            <person name="Garnier T."/>
            <person name="Eiglmeier K."/>
            <person name="Camus J.-C."/>
            <person name="Medina N."/>
            <person name="Mansoor H."/>
            <person name="Pryor M."/>
            <person name="Duthoy S."/>
            <person name="Grondin S."/>
            <person name="Lacroix C."/>
            <person name="Monsempe C."/>
            <person name="Simon S."/>
            <person name="Harris B."/>
            <person name="Atkin R."/>
            <person name="Doggett J."/>
            <person name="Mayes R."/>
            <person name="Keating L."/>
            <person name="Wheeler P.R."/>
            <person name="Parkhill J."/>
            <person name="Barrell B.G."/>
            <person name="Cole S.T."/>
            <person name="Gordon S.V."/>
            <person name="Hewinson R.G."/>
        </authorList>
    </citation>
    <scope>NUCLEOTIDE SEQUENCE [LARGE SCALE GENOMIC DNA]</scope>
    <source>
        <strain>ATCC BAA-935 / AF2122/97</strain>
    </source>
</reference>
<reference key="2">
    <citation type="journal article" date="2017" name="Genome Announc.">
        <title>Updated reference genome sequence and annotation of Mycobacterium bovis AF2122/97.</title>
        <authorList>
            <person name="Malone K.M."/>
            <person name="Farrell D."/>
            <person name="Stuber T.P."/>
            <person name="Schubert O.T."/>
            <person name="Aebersold R."/>
            <person name="Robbe-Austerman S."/>
            <person name="Gordon S.V."/>
        </authorList>
    </citation>
    <scope>NUCLEOTIDE SEQUENCE [LARGE SCALE GENOMIC DNA]</scope>
    <scope>GENOME REANNOTATION</scope>
    <source>
        <strain>ATCC BAA-935 / AF2122/97</strain>
    </source>
</reference>